<keyword id="KW-0045">Antibiotic biosynthesis</keyword>
<keyword id="KW-0210">Decarboxylase</keyword>
<keyword id="KW-0456">Lyase</keyword>
<keyword id="KW-0460">Magnesium</keyword>
<keyword id="KW-1185">Reference proteome</keyword>
<keyword id="KW-0786">Thiamine pyrophosphate</keyword>
<name>PPD_STRVT</name>
<proteinExistence type="evidence at protein level"/>
<gene>
    <name evidence="4" type="primary">ppd</name>
    <name evidence="7" type="ORF">SSQG_01038</name>
</gene>
<dbReference type="EC" id="4.1.1.82" evidence="1"/>
<dbReference type="EMBL" id="X65195">
    <property type="protein sequence ID" value="CAJ14045.1"/>
    <property type="molecule type" value="Genomic_DNA"/>
</dbReference>
<dbReference type="EMBL" id="AY632421">
    <property type="protein sequence ID" value="AAU00072.1"/>
    <property type="molecule type" value="Genomic_DNA"/>
</dbReference>
<dbReference type="EMBL" id="GG657757">
    <property type="protein sequence ID" value="EFL30520.1"/>
    <property type="molecule type" value="Genomic_DNA"/>
</dbReference>
<dbReference type="RefSeq" id="WP_003988635.1">
    <property type="nucleotide sequence ID" value="NZ_GG657757.1"/>
</dbReference>
<dbReference type="SMR" id="O86938"/>
<dbReference type="STRING" id="591159.SSQG_01038"/>
<dbReference type="eggNOG" id="COG0028">
    <property type="taxonomic scope" value="Bacteria"/>
</dbReference>
<dbReference type="eggNOG" id="COG4032">
    <property type="taxonomic scope" value="Bacteria"/>
</dbReference>
<dbReference type="HOGENOM" id="CLU_042853_0_0_11"/>
<dbReference type="OrthoDB" id="9785953at2"/>
<dbReference type="BioCyc" id="MetaCyc:MONOMER-15035"/>
<dbReference type="BRENDA" id="4.1.1.82">
    <property type="organism ID" value="6116"/>
</dbReference>
<dbReference type="UniPathway" id="UPA00197"/>
<dbReference type="Proteomes" id="UP000004184">
    <property type="component" value="Unassembled WGS sequence"/>
</dbReference>
<dbReference type="GO" id="GO:0000287">
    <property type="term" value="F:magnesium ion binding"/>
    <property type="evidence" value="ECO:0007669"/>
    <property type="project" value="UniProtKB-ARBA"/>
</dbReference>
<dbReference type="GO" id="GO:0033980">
    <property type="term" value="F:phosphonopyruvate decarboxylase activity"/>
    <property type="evidence" value="ECO:0007669"/>
    <property type="project" value="UniProtKB-EC"/>
</dbReference>
<dbReference type="GO" id="GO:0030976">
    <property type="term" value="F:thiamine pyrophosphate binding"/>
    <property type="evidence" value="ECO:0007669"/>
    <property type="project" value="InterPro"/>
</dbReference>
<dbReference type="GO" id="GO:0017000">
    <property type="term" value="P:antibiotic biosynthetic process"/>
    <property type="evidence" value="ECO:0007669"/>
    <property type="project" value="UniProtKB-KW"/>
</dbReference>
<dbReference type="GO" id="GO:0032923">
    <property type="term" value="P:organic phosphonate biosynthetic process"/>
    <property type="evidence" value="ECO:0007669"/>
    <property type="project" value="InterPro"/>
</dbReference>
<dbReference type="CDD" id="cd03371">
    <property type="entry name" value="TPP_PpyrDC"/>
    <property type="match status" value="1"/>
</dbReference>
<dbReference type="CDD" id="cd07035">
    <property type="entry name" value="TPP_PYR_POX_like"/>
    <property type="match status" value="1"/>
</dbReference>
<dbReference type="Gene3D" id="3.40.50.970">
    <property type="match status" value="2"/>
</dbReference>
<dbReference type="InterPro" id="IPR017684">
    <property type="entry name" value="Phosphono-pyrv_decarboxylase"/>
</dbReference>
<dbReference type="InterPro" id="IPR029061">
    <property type="entry name" value="THDP-binding"/>
</dbReference>
<dbReference type="InterPro" id="IPR012001">
    <property type="entry name" value="Thiamin_PyroP_enz_TPP-bd_dom"/>
</dbReference>
<dbReference type="InterPro" id="IPR051818">
    <property type="entry name" value="TPP_dependent_decarboxylase"/>
</dbReference>
<dbReference type="InterPro" id="IPR011766">
    <property type="entry name" value="TPP_enzyme_TPP-bd"/>
</dbReference>
<dbReference type="NCBIfam" id="TIGR03297">
    <property type="entry name" value="Ppyr-DeCO2ase"/>
    <property type="match status" value="1"/>
</dbReference>
<dbReference type="PANTHER" id="PTHR42818:SF1">
    <property type="entry name" value="SULFOPYRUVATE DECARBOXYLASE"/>
    <property type="match status" value="1"/>
</dbReference>
<dbReference type="PANTHER" id="PTHR42818">
    <property type="entry name" value="SULFOPYRUVATE DECARBOXYLASE SUBUNIT ALPHA"/>
    <property type="match status" value="1"/>
</dbReference>
<dbReference type="Pfam" id="PF02775">
    <property type="entry name" value="TPP_enzyme_C"/>
    <property type="match status" value="1"/>
</dbReference>
<dbReference type="Pfam" id="PF02776">
    <property type="entry name" value="TPP_enzyme_N"/>
    <property type="match status" value="1"/>
</dbReference>
<dbReference type="SUPFAM" id="SSF52518">
    <property type="entry name" value="Thiamin diphosphate-binding fold (THDP-binding)"/>
    <property type="match status" value="2"/>
</dbReference>
<feature type="chain" id="PRO_0000090842" description="Phosphonopyruvate decarboxylase">
    <location>
        <begin position="1"/>
        <end position="397"/>
    </location>
</feature>
<evidence type="ECO:0000250" key="1">
    <source>
        <dbReference type="UniProtKB" id="Q54271"/>
    </source>
</evidence>
<evidence type="ECO:0000269" key="2">
    <source>
    </source>
</evidence>
<evidence type="ECO:0000269" key="3">
    <source>
    </source>
</evidence>
<evidence type="ECO:0000303" key="4">
    <source>
    </source>
</evidence>
<evidence type="ECO:0000305" key="5"/>
<evidence type="ECO:0000305" key="6">
    <source>
    </source>
</evidence>
<evidence type="ECO:0000312" key="7">
    <source>
        <dbReference type="EMBL" id="EFL30520.1"/>
    </source>
</evidence>
<comment type="function">
    <text evidence="1 2">Involved in the biosynthesis of phosphinothricin tripeptide (PTT), also known as bialaphos (BA), a natural-product antibiotic and potent herbicide (PubMed:15616300). Catalyzes the decarboxylation of phosphonopyruvate (PnPy) to generate phosphonoacetaldehyde (PnAA) (By similarity).</text>
</comment>
<comment type="catalytic activity">
    <reaction evidence="1">
        <text>3-phosphonopyruvate + H(+) = phosphonoacetaldehyde + CO2</text>
        <dbReference type="Rhea" id="RHEA:20768"/>
        <dbReference type="ChEBI" id="CHEBI:15378"/>
        <dbReference type="ChEBI" id="CHEBI:16526"/>
        <dbReference type="ChEBI" id="CHEBI:58383"/>
        <dbReference type="ChEBI" id="CHEBI:71402"/>
        <dbReference type="EC" id="4.1.1.82"/>
    </reaction>
    <physiologicalReaction direction="left-to-right" evidence="1">
        <dbReference type="Rhea" id="RHEA:20769"/>
    </physiologicalReaction>
</comment>
<comment type="cofactor">
    <cofactor evidence="1">
        <name>thiamine diphosphate</name>
        <dbReference type="ChEBI" id="CHEBI:58937"/>
    </cofactor>
</comment>
<comment type="cofactor">
    <cofactor evidence="1">
        <name>Mg(2+)</name>
        <dbReference type="ChEBI" id="CHEBI:18420"/>
    </cofactor>
</comment>
<comment type="pathway">
    <text evidence="2 6">Secondary metabolite biosynthesis; bialaphos biosynthesis.</text>
</comment>
<comment type="disruption phenotype">
    <text evidence="3">Disruption of the gene abolishes production of phosphinothricin tripeptide.</text>
</comment>
<comment type="similarity">
    <text evidence="5">Belongs to the TPP enzyme family.</text>
</comment>
<reference key="1">
    <citation type="journal article" date="1998" name="FEMS Microbiol. Lett.">
        <title>Isolation and characterization of the PEP-phosphomutase and the phosphonopyruvate decarboxylase genes from the phosphinothricin tripeptide producer Streptomyces viridochromogenes Tu494.</title>
        <authorList>
            <person name="Schwartz D."/>
            <person name="Recktenwald J."/>
            <person name="Pelzer S."/>
            <person name="Wohlleben W."/>
        </authorList>
    </citation>
    <scope>NUCLEOTIDE SEQUENCE [GENOMIC DNA]</scope>
    <scope>DISRUPTION PHENOTYPE</scope>
    <source>
        <strain>DSM 40736 / JCM 4977 / BCRC 1201 / Tue 494</strain>
    </source>
</reference>
<reference key="2">
    <citation type="journal article" date="2005" name="Antimicrob. Agents Chemother.">
        <title>Molecular cloning, sequence analysis, and heterologous expression of the phosphinothricin tripeptide biosynthetic gene cluster from Streptomyces viridochromogenes DSM 40736.</title>
        <authorList>
            <person name="Blodgett J.A."/>
            <person name="Zhang J.K."/>
            <person name="Metcalf W.W."/>
        </authorList>
    </citation>
    <scope>NUCLEOTIDE SEQUENCE [GENOMIC DNA]</scope>
    <scope>FUNCTION IN PTT BIOSYNTHESIS</scope>
    <scope>PATHWAY</scope>
    <source>
        <strain>DSM 40736 / JCM 4977 / BCRC 1201 / Tue 494</strain>
    </source>
</reference>
<reference key="3">
    <citation type="submission" date="2009-02" db="EMBL/GenBank/DDBJ databases">
        <title>Annotation of Streptomyces viridochromogenes strain DSM 40736.</title>
        <authorList>
            <consortium name="The Broad Institute Genome Sequencing Platform"/>
            <consortium name="Broad Institute Microbial Sequencing Center"/>
            <person name="Fischbach M."/>
            <person name="Godfrey P."/>
            <person name="Ward D."/>
            <person name="Young S."/>
            <person name="Zeng Q."/>
            <person name="Koehrsen M."/>
            <person name="Alvarado L."/>
            <person name="Berlin A.M."/>
            <person name="Bochicchio J."/>
            <person name="Borenstein D."/>
            <person name="Chapman S.B."/>
            <person name="Chen Z."/>
            <person name="Engels R."/>
            <person name="Freedman E."/>
            <person name="Gellesch M."/>
            <person name="Goldberg J."/>
            <person name="Griggs A."/>
            <person name="Gujja S."/>
            <person name="Heilman E.R."/>
            <person name="Heiman D.I."/>
            <person name="Hepburn T.A."/>
            <person name="Howarth C."/>
            <person name="Jen D."/>
            <person name="Larson L."/>
            <person name="Lewis B."/>
            <person name="Mehta T."/>
            <person name="Park D."/>
            <person name="Pearson M."/>
            <person name="Richards J."/>
            <person name="Roberts A."/>
            <person name="Saif S."/>
            <person name="Shea T.D."/>
            <person name="Shenoy N."/>
            <person name="Sisk P."/>
            <person name="Stolte C."/>
            <person name="Sykes S.N."/>
            <person name="Thomson T."/>
            <person name="Walk T."/>
            <person name="White J."/>
            <person name="Yandava C."/>
            <person name="Straight P."/>
            <person name="Clardy J."/>
            <person name="Hung D."/>
            <person name="Kolter R."/>
            <person name="Mekalanos J."/>
            <person name="Walker S."/>
            <person name="Walsh C.T."/>
            <person name="Wieland-Brown L.C."/>
            <person name="Haas B."/>
            <person name="Nusbaum C."/>
            <person name="Birren B."/>
        </authorList>
    </citation>
    <scope>NUCLEOTIDE SEQUENCE [LARGE SCALE GENOMIC DNA]</scope>
    <source>
        <strain>DSM 40736 / JCM 4977 / BCRC 1201 / Tue 494</strain>
    </source>
</reference>
<accession>O86938</accession>
<accession>D9XF41</accession>
<accession>Q5IW37</accession>
<protein>
    <recommendedName>
        <fullName evidence="4">Phosphonopyruvate decarboxylase</fullName>
        <ecNumber evidence="1">4.1.1.82</ecNumber>
    </recommendedName>
</protein>
<sequence>MIGAADLVAGLTGLGVTTVAGVPCSYLTPLINRVISDPATRYLTVTQEGEAAAVAAGAWLGGGLGCAITQNSGLGNMTNPLTSLLHPARIPAVVITTWRGRPGEKDEPQHHLMGRITGDLLDLCDMEWSLIPDTTDELHTAFAACRASLAHRELPYGFLLPQGVVADEPLNETAPRSATGQVVRYARPGRSAARPTRIAALERLLAELPRDAAVVSTTGKSSRELYTLDDRDQHFYMVGAMGSAATVGLGVALHTPRPVVVVDGDGSVLMRLGSLATVGAHAPGNLVHLVLDNGVHDSTGGQRTLSSAVDLPAVAAACGYRAVHACTSLDDLSDALATALATDGPTLVHLAIRPGSLDGLGRPKVTPAEVARRFRAFVTTPPAGTATPVHAGGVTAR</sequence>
<organism>
    <name type="scientific">Streptomyces viridochromogenes (strain DSM 40736 / JCM 4977 / BCRC 1201 / Tue 494)</name>
    <dbReference type="NCBI Taxonomy" id="591159"/>
    <lineage>
        <taxon>Bacteria</taxon>
        <taxon>Bacillati</taxon>
        <taxon>Actinomycetota</taxon>
        <taxon>Actinomycetes</taxon>
        <taxon>Kitasatosporales</taxon>
        <taxon>Streptomycetaceae</taxon>
        <taxon>Streptomyces</taxon>
    </lineage>
</organism>